<keyword id="KW-0963">Cytoplasm</keyword>
<keyword id="KW-0346">Stress response</keyword>
<sequence>MIASKFGIGQQVRHSLHGYLGVVIDIDPEYSLAPPEPDEVANNKTLRSSPWYHVVIEDDDGQPVHTYLAEAQLTYEDVDAHPEQPSLDELAASIRHQLQAPHLRN</sequence>
<comment type="function">
    <text evidence="1">Involved in the degradation of certain denaturated proteins, including DnaA, during heat shock stress.</text>
</comment>
<comment type="subcellular location">
    <subcellularLocation>
        <location evidence="1">Cytoplasm</location>
    </subcellularLocation>
</comment>
<comment type="similarity">
    <text evidence="1">Belongs to the HspQ family.</text>
</comment>
<proteinExistence type="inferred from homology"/>
<gene>
    <name evidence="1" type="primary">hspQ</name>
    <name type="ordered locus">YPDSF_1530</name>
</gene>
<organism>
    <name type="scientific">Yersinia pestis (strain Pestoides F)</name>
    <dbReference type="NCBI Taxonomy" id="386656"/>
    <lineage>
        <taxon>Bacteria</taxon>
        <taxon>Pseudomonadati</taxon>
        <taxon>Pseudomonadota</taxon>
        <taxon>Gammaproteobacteria</taxon>
        <taxon>Enterobacterales</taxon>
        <taxon>Yersiniaceae</taxon>
        <taxon>Yersinia</taxon>
    </lineage>
</organism>
<name>HSPQ_YERPP</name>
<accession>A4TKV5</accession>
<feature type="chain" id="PRO_0000315323" description="Heat shock protein HspQ">
    <location>
        <begin position="1"/>
        <end position="105"/>
    </location>
</feature>
<feature type="region of interest" description="Disordered" evidence="2">
    <location>
        <begin position="80"/>
        <end position="105"/>
    </location>
</feature>
<dbReference type="EMBL" id="CP000668">
    <property type="protein sequence ID" value="ABP39917.1"/>
    <property type="molecule type" value="Genomic_DNA"/>
</dbReference>
<dbReference type="RefSeq" id="WP_002213054.1">
    <property type="nucleotide sequence ID" value="NZ_CP009715.1"/>
</dbReference>
<dbReference type="SMR" id="A4TKV5"/>
<dbReference type="GeneID" id="57977119"/>
<dbReference type="KEGG" id="ypp:YPDSF_1530"/>
<dbReference type="PATRIC" id="fig|386656.14.peg.2242"/>
<dbReference type="GO" id="GO:0005737">
    <property type="term" value="C:cytoplasm"/>
    <property type="evidence" value="ECO:0007669"/>
    <property type="project" value="UniProtKB-SubCell"/>
</dbReference>
<dbReference type="GO" id="GO:0003677">
    <property type="term" value="F:DNA binding"/>
    <property type="evidence" value="ECO:0007669"/>
    <property type="project" value="InterPro"/>
</dbReference>
<dbReference type="GO" id="GO:0009408">
    <property type="term" value="P:response to heat"/>
    <property type="evidence" value="ECO:0007669"/>
    <property type="project" value="UniProtKB-UniRule"/>
</dbReference>
<dbReference type="Gene3D" id="2.30.30.390">
    <property type="entry name" value="Hemimethylated DNA-binding domain"/>
    <property type="match status" value="1"/>
</dbReference>
<dbReference type="HAMAP" id="MF_01194">
    <property type="entry name" value="HspQ"/>
    <property type="match status" value="1"/>
</dbReference>
<dbReference type="InterPro" id="IPR011722">
    <property type="entry name" value="Hemimethylated_DNA-bd_dom"/>
</dbReference>
<dbReference type="InterPro" id="IPR036623">
    <property type="entry name" value="Hemimethylated_DNA-bd_sf"/>
</dbReference>
<dbReference type="InterPro" id="IPR022866">
    <property type="entry name" value="HspQ"/>
</dbReference>
<dbReference type="NCBIfam" id="NF010729">
    <property type="entry name" value="PRK14129.1"/>
    <property type="match status" value="1"/>
</dbReference>
<dbReference type="NCBIfam" id="TIGR02097">
    <property type="entry name" value="yccV"/>
    <property type="match status" value="1"/>
</dbReference>
<dbReference type="Pfam" id="PF08755">
    <property type="entry name" value="YccV-like"/>
    <property type="match status" value="1"/>
</dbReference>
<dbReference type="SMART" id="SM00992">
    <property type="entry name" value="YccV-like"/>
    <property type="match status" value="1"/>
</dbReference>
<dbReference type="SUPFAM" id="SSF141255">
    <property type="entry name" value="YccV-like"/>
    <property type="match status" value="1"/>
</dbReference>
<protein>
    <recommendedName>
        <fullName evidence="1">Heat shock protein HspQ</fullName>
    </recommendedName>
</protein>
<evidence type="ECO:0000255" key="1">
    <source>
        <dbReference type="HAMAP-Rule" id="MF_01194"/>
    </source>
</evidence>
<evidence type="ECO:0000256" key="2">
    <source>
        <dbReference type="SAM" id="MobiDB-lite"/>
    </source>
</evidence>
<reference key="1">
    <citation type="submission" date="2007-02" db="EMBL/GenBank/DDBJ databases">
        <title>Complete sequence of chromosome of Yersinia pestis Pestoides F.</title>
        <authorList>
            <consortium name="US DOE Joint Genome Institute"/>
            <person name="Copeland A."/>
            <person name="Lucas S."/>
            <person name="Lapidus A."/>
            <person name="Barry K."/>
            <person name="Detter J.C."/>
            <person name="Glavina del Rio T."/>
            <person name="Hammon N."/>
            <person name="Israni S."/>
            <person name="Dalin E."/>
            <person name="Tice H."/>
            <person name="Pitluck S."/>
            <person name="Di Bartolo G."/>
            <person name="Chain P."/>
            <person name="Malfatti S."/>
            <person name="Shin M."/>
            <person name="Vergez L."/>
            <person name="Schmutz J."/>
            <person name="Larimer F."/>
            <person name="Land M."/>
            <person name="Hauser L."/>
            <person name="Worsham P."/>
            <person name="Chu M."/>
            <person name="Bearden S."/>
            <person name="Garcia E."/>
            <person name="Richardson P."/>
        </authorList>
    </citation>
    <scope>NUCLEOTIDE SEQUENCE [LARGE SCALE GENOMIC DNA]</scope>
    <source>
        <strain>Pestoides F</strain>
    </source>
</reference>